<organism>
    <name type="scientific">Picea sitchensis</name>
    <name type="common">Sitka spruce</name>
    <name type="synonym">Pinus sitchensis</name>
    <dbReference type="NCBI Taxonomy" id="3332"/>
    <lineage>
        <taxon>Eukaryota</taxon>
        <taxon>Viridiplantae</taxon>
        <taxon>Streptophyta</taxon>
        <taxon>Embryophyta</taxon>
        <taxon>Tracheophyta</taxon>
        <taxon>Spermatophyta</taxon>
        <taxon>Pinopsida</taxon>
        <taxon>Pinidae</taxon>
        <taxon>Conifers I</taxon>
        <taxon>Pinales</taxon>
        <taxon>Pinaceae</taxon>
        <taxon>Picea</taxon>
    </lineage>
</organism>
<gene>
    <name evidence="1" type="primary">matK</name>
</gene>
<comment type="function">
    <text evidence="1">Usually encoded in the trnK tRNA gene intron. Probably assists in splicing its own and other chloroplast group II introns.</text>
</comment>
<comment type="subcellular location">
    <subcellularLocation>
        <location>Plastid</location>
        <location>Chloroplast</location>
    </subcellularLocation>
</comment>
<comment type="similarity">
    <text evidence="1">Belongs to the intron maturase 2 family. MatK subfamily.</text>
</comment>
<name>MATK_PICSI</name>
<protein>
    <recommendedName>
        <fullName evidence="1">Maturase K</fullName>
    </recommendedName>
    <alternativeName>
        <fullName evidence="1">Intron maturase</fullName>
    </alternativeName>
</protein>
<feature type="chain" id="PRO_0000143601" description="Maturase K">
    <location>
        <begin position="1"/>
        <end position="515"/>
    </location>
</feature>
<reference key="1">
    <citation type="submission" date="2001-05" db="EMBL/GenBank/DDBJ databases">
        <title>Phylogenetic analysis of Picea species based on chloroplast and mitochondrial gene sequences.</title>
        <authorList>
            <person name="Germano J."/>
            <person name="Thorner A.R."/>
            <person name="Klein A.S."/>
        </authorList>
    </citation>
    <scope>NUCLEOTIDE SEQUENCE [GENOMIC DNA]</scope>
</reference>
<keyword id="KW-0150">Chloroplast</keyword>
<keyword id="KW-0507">mRNA processing</keyword>
<keyword id="KW-0934">Plastid</keyword>
<keyword id="KW-0694">RNA-binding</keyword>
<keyword id="KW-0819">tRNA processing</keyword>
<evidence type="ECO:0000255" key="1">
    <source>
        <dbReference type="HAMAP-Rule" id="MF_01390"/>
    </source>
</evidence>
<sequence length="515" mass="60876">MDEFHRYGKEDSSWQQCFLYPLFFQEDLYAISHDHYLDGSSSSEPMEHLSSNDQFSFLTVKRLIGQIRQQNHSIVLFVNCDPNPLVDRKKSSYSESVLEGLTLVLEVPFSIRSKYSVEGMNEWKSFRSIHSIFPFLEDKFPHSNYVSDTRIPYSIHPEILVRTFRRWIGDAPSLHPLRSILYEYRNSSESLQRSIIVVPKVNTRFFLFLWNNYVYECESILVSLLKRSSHSRSLSHGSFPQRTHFHRKIKNIFLFSRRNSLQSIWSLKDPNIHYVRYGERSIIAIKGTHLLVKKYRYYLPIFRQCYFHLWNEPYRVCSHQLSKNCSSSLGYFMRVRMKPLLVKTKMLDELFIADLITDEFDPIVPIVPIIGLLSREKFCDISGRPISKLSWTSLTDDDILDRFDRIWRNLFHYYSGSFGRDGLYRIKYILSLSCAKTLACKHKSTIRVVRKELGPELFKKSFSKERELDSPPFSSKAAARSQRERIWHSDIPQINPLAHSWQKIQDLKIENLFDQ</sequence>
<proteinExistence type="inferred from homology"/>
<dbReference type="EMBL" id="AY035203">
    <property type="protein sequence ID" value="AAK61811.1"/>
    <property type="molecule type" value="Genomic_DNA"/>
</dbReference>
<dbReference type="RefSeq" id="YP_002905063.1">
    <property type="nucleotide sequence ID" value="NC_011152.3"/>
</dbReference>
<dbReference type="GeneID" id="7874930"/>
<dbReference type="GO" id="GO:0009507">
    <property type="term" value="C:chloroplast"/>
    <property type="evidence" value="ECO:0007669"/>
    <property type="project" value="UniProtKB-SubCell"/>
</dbReference>
<dbReference type="GO" id="GO:0003723">
    <property type="term" value="F:RNA binding"/>
    <property type="evidence" value="ECO:0007669"/>
    <property type="project" value="UniProtKB-KW"/>
</dbReference>
<dbReference type="GO" id="GO:0006397">
    <property type="term" value="P:mRNA processing"/>
    <property type="evidence" value="ECO:0007669"/>
    <property type="project" value="UniProtKB-KW"/>
</dbReference>
<dbReference type="GO" id="GO:0008380">
    <property type="term" value="P:RNA splicing"/>
    <property type="evidence" value="ECO:0007669"/>
    <property type="project" value="UniProtKB-UniRule"/>
</dbReference>
<dbReference type="GO" id="GO:0008033">
    <property type="term" value="P:tRNA processing"/>
    <property type="evidence" value="ECO:0007669"/>
    <property type="project" value="UniProtKB-KW"/>
</dbReference>
<dbReference type="HAMAP" id="MF_01390">
    <property type="entry name" value="MatK"/>
    <property type="match status" value="1"/>
</dbReference>
<dbReference type="InterPro" id="IPR024937">
    <property type="entry name" value="Domain_X"/>
</dbReference>
<dbReference type="InterPro" id="IPR002866">
    <property type="entry name" value="Maturase_MatK"/>
</dbReference>
<dbReference type="InterPro" id="IPR024942">
    <property type="entry name" value="Maturase_MatK_N"/>
</dbReference>
<dbReference type="PANTHER" id="PTHR34811">
    <property type="entry name" value="MATURASE K"/>
    <property type="match status" value="1"/>
</dbReference>
<dbReference type="PANTHER" id="PTHR34811:SF1">
    <property type="entry name" value="MATURASE K"/>
    <property type="match status" value="1"/>
</dbReference>
<dbReference type="Pfam" id="PF01348">
    <property type="entry name" value="Intron_maturas2"/>
    <property type="match status" value="1"/>
</dbReference>
<dbReference type="Pfam" id="PF01824">
    <property type="entry name" value="MatK_N"/>
    <property type="match status" value="1"/>
</dbReference>
<geneLocation type="chloroplast"/>
<accession>Q8MC55</accession>